<name>NUOB_DEIDV</name>
<organism>
    <name type="scientific">Deinococcus deserti (strain DSM 17065 / CIP 109153 / LMG 22923 / VCD115)</name>
    <dbReference type="NCBI Taxonomy" id="546414"/>
    <lineage>
        <taxon>Bacteria</taxon>
        <taxon>Thermotogati</taxon>
        <taxon>Deinococcota</taxon>
        <taxon>Deinococci</taxon>
        <taxon>Deinococcales</taxon>
        <taxon>Deinococcaceae</taxon>
        <taxon>Deinococcus</taxon>
    </lineage>
</organism>
<accession>C1D0H2</accession>
<evidence type="ECO:0000255" key="1">
    <source>
        <dbReference type="HAMAP-Rule" id="MF_01356"/>
    </source>
</evidence>
<comment type="function">
    <text evidence="1">NDH-1 shuttles electrons from NADH, via FMN and iron-sulfur (Fe-S) centers, to quinones in the respiratory chain. The immediate electron acceptor for the enzyme in this species is believed to be a menaquinone. Couples the redox reaction to proton translocation (for every two electrons transferred, four hydrogen ions are translocated across the cytoplasmic membrane), and thus conserves the redox energy in a proton gradient.</text>
</comment>
<comment type="catalytic activity">
    <reaction evidence="1">
        <text>a quinone + NADH + 5 H(+)(in) = a quinol + NAD(+) + 4 H(+)(out)</text>
        <dbReference type="Rhea" id="RHEA:57888"/>
        <dbReference type="ChEBI" id="CHEBI:15378"/>
        <dbReference type="ChEBI" id="CHEBI:24646"/>
        <dbReference type="ChEBI" id="CHEBI:57540"/>
        <dbReference type="ChEBI" id="CHEBI:57945"/>
        <dbReference type="ChEBI" id="CHEBI:132124"/>
    </reaction>
</comment>
<comment type="cofactor">
    <cofactor evidence="1">
        <name>[4Fe-4S] cluster</name>
        <dbReference type="ChEBI" id="CHEBI:49883"/>
    </cofactor>
    <text evidence="1">Binds 1 [4Fe-4S] cluster.</text>
</comment>
<comment type="subunit">
    <text evidence="1">NDH-1 is composed of 15 different subunits. Subunits NuoB, C, D, E, F, and G constitute the peripheral sector of the complex.</text>
</comment>
<comment type="subcellular location">
    <subcellularLocation>
        <location evidence="1">Cell membrane</location>
        <topology evidence="1">Peripheral membrane protein</topology>
        <orientation evidence="1">Cytoplasmic side</orientation>
    </subcellularLocation>
</comment>
<comment type="similarity">
    <text evidence="1">Belongs to the complex I 20 kDa subunit family.</text>
</comment>
<keyword id="KW-0004">4Fe-4S</keyword>
<keyword id="KW-1003">Cell membrane</keyword>
<keyword id="KW-0408">Iron</keyword>
<keyword id="KW-0411">Iron-sulfur</keyword>
<keyword id="KW-0472">Membrane</keyword>
<keyword id="KW-0479">Metal-binding</keyword>
<keyword id="KW-0520">NAD</keyword>
<keyword id="KW-0874">Quinone</keyword>
<keyword id="KW-1185">Reference proteome</keyword>
<keyword id="KW-1278">Translocase</keyword>
<keyword id="KW-0813">Transport</keyword>
<feature type="chain" id="PRO_1000214857" description="NADH-quinone oxidoreductase subunit B">
    <location>
        <begin position="1"/>
        <end position="178"/>
    </location>
</feature>
<feature type="binding site" evidence="1">
    <location>
        <position position="45"/>
    </location>
    <ligand>
        <name>[4Fe-4S] cluster</name>
        <dbReference type="ChEBI" id="CHEBI:49883"/>
    </ligand>
</feature>
<feature type="binding site" evidence="1">
    <location>
        <position position="46"/>
    </location>
    <ligand>
        <name>[4Fe-4S] cluster</name>
        <dbReference type="ChEBI" id="CHEBI:49883"/>
    </ligand>
</feature>
<feature type="binding site" evidence="1">
    <location>
        <position position="111"/>
    </location>
    <ligand>
        <name>[4Fe-4S] cluster</name>
        <dbReference type="ChEBI" id="CHEBI:49883"/>
    </ligand>
</feature>
<feature type="binding site" evidence="1">
    <location>
        <position position="140"/>
    </location>
    <ligand>
        <name>[4Fe-4S] cluster</name>
        <dbReference type="ChEBI" id="CHEBI:49883"/>
    </ligand>
</feature>
<gene>
    <name evidence="1" type="primary">nuoB</name>
    <name type="ordered locus">Deide_05100</name>
</gene>
<sequence>MALKELFDRDWQELESEGILFSNLEKLVAWGRSNSLWPATFGLACCAIEMMSSTNARNDMARFGSEVFRASPRQADVMIVAGRLSKKMAPVMRRVYDQMPDPKWVIAMGACASSGGMFNNYAIVQNVDSVVPVDIYVPGCPPRPEALIYAVMQLQKKVRGEAFDQLGHQLPMVDAWTR</sequence>
<protein>
    <recommendedName>
        <fullName evidence="1">NADH-quinone oxidoreductase subunit B</fullName>
        <ecNumber evidence="1">7.1.1.-</ecNumber>
    </recommendedName>
    <alternativeName>
        <fullName evidence="1">NADH dehydrogenase I subunit B</fullName>
    </alternativeName>
    <alternativeName>
        <fullName evidence="1">NDH-1 subunit B</fullName>
    </alternativeName>
</protein>
<reference key="1">
    <citation type="journal article" date="2009" name="PLoS Genet.">
        <title>Alliance of proteomics and genomics to unravel the specificities of Sahara bacterium Deinococcus deserti.</title>
        <authorList>
            <person name="de Groot A."/>
            <person name="Dulermo R."/>
            <person name="Ortet P."/>
            <person name="Blanchard L."/>
            <person name="Guerin P."/>
            <person name="Fernandez B."/>
            <person name="Vacherie B."/>
            <person name="Dossat C."/>
            <person name="Jolivet E."/>
            <person name="Siguier P."/>
            <person name="Chandler M."/>
            <person name="Barakat M."/>
            <person name="Dedieu A."/>
            <person name="Barbe V."/>
            <person name="Heulin T."/>
            <person name="Sommer S."/>
            <person name="Achouak W."/>
            <person name="Armengaud J."/>
        </authorList>
    </citation>
    <scope>NUCLEOTIDE SEQUENCE [LARGE SCALE GENOMIC DNA]</scope>
    <source>
        <strain>DSM 17065 / CIP 109153 / LMG 22923 / VCD115</strain>
    </source>
</reference>
<proteinExistence type="inferred from homology"/>
<dbReference type="EC" id="7.1.1.-" evidence="1"/>
<dbReference type="EMBL" id="CP001114">
    <property type="protein sequence ID" value="ACO45346.1"/>
    <property type="molecule type" value="Genomic_DNA"/>
</dbReference>
<dbReference type="RefSeq" id="WP_012692469.1">
    <property type="nucleotide sequence ID" value="NC_012526.1"/>
</dbReference>
<dbReference type="SMR" id="C1D0H2"/>
<dbReference type="STRING" id="546414.Deide_05100"/>
<dbReference type="PaxDb" id="546414-Deide_05100"/>
<dbReference type="KEGG" id="ddr:Deide_05100"/>
<dbReference type="eggNOG" id="COG0377">
    <property type="taxonomic scope" value="Bacteria"/>
</dbReference>
<dbReference type="HOGENOM" id="CLU_055737_7_3_0"/>
<dbReference type="OrthoDB" id="9786737at2"/>
<dbReference type="Proteomes" id="UP000002208">
    <property type="component" value="Chromosome"/>
</dbReference>
<dbReference type="GO" id="GO:0005886">
    <property type="term" value="C:plasma membrane"/>
    <property type="evidence" value="ECO:0007669"/>
    <property type="project" value="UniProtKB-SubCell"/>
</dbReference>
<dbReference type="GO" id="GO:0045271">
    <property type="term" value="C:respiratory chain complex I"/>
    <property type="evidence" value="ECO:0007669"/>
    <property type="project" value="TreeGrafter"/>
</dbReference>
<dbReference type="GO" id="GO:0051539">
    <property type="term" value="F:4 iron, 4 sulfur cluster binding"/>
    <property type="evidence" value="ECO:0007669"/>
    <property type="project" value="UniProtKB-KW"/>
</dbReference>
<dbReference type="GO" id="GO:0005506">
    <property type="term" value="F:iron ion binding"/>
    <property type="evidence" value="ECO:0007669"/>
    <property type="project" value="UniProtKB-UniRule"/>
</dbReference>
<dbReference type="GO" id="GO:0008137">
    <property type="term" value="F:NADH dehydrogenase (ubiquinone) activity"/>
    <property type="evidence" value="ECO:0007669"/>
    <property type="project" value="InterPro"/>
</dbReference>
<dbReference type="GO" id="GO:0050136">
    <property type="term" value="F:NADH:ubiquinone reductase (non-electrogenic) activity"/>
    <property type="evidence" value="ECO:0007669"/>
    <property type="project" value="UniProtKB-UniRule"/>
</dbReference>
<dbReference type="GO" id="GO:0048038">
    <property type="term" value="F:quinone binding"/>
    <property type="evidence" value="ECO:0007669"/>
    <property type="project" value="UniProtKB-KW"/>
</dbReference>
<dbReference type="GO" id="GO:0009060">
    <property type="term" value="P:aerobic respiration"/>
    <property type="evidence" value="ECO:0007669"/>
    <property type="project" value="TreeGrafter"/>
</dbReference>
<dbReference type="GO" id="GO:0015990">
    <property type="term" value="P:electron transport coupled proton transport"/>
    <property type="evidence" value="ECO:0007669"/>
    <property type="project" value="TreeGrafter"/>
</dbReference>
<dbReference type="FunFam" id="3.40.50.12280:FF:000004">
    <property type="entry name" value="NADH-quinone oxidoreductase subunit B"/>
    <property type="match status" value="1"/>
</dbReference>
<dbReference type="Gene3D" id="3.40.50.12280">
    <property type="match status" value="1"/>
</dbReference>
<dbReference type="HAMAP" id="MF_01356">
    <property type="entry name" value="NDH1_NuoB"/>
    <property type="match status" value="1"/>
</dbReference>
<dbReference type="InterPro" id="IPR006137">
    <property type="entry name" value="NADH_UbQ_OxRdtase-like_20kDa"/>
</dbReference>
<dbReference type="InterPro" id="IPR006138">
    <property type="entry name" value="NADH_UQ_OxRdtase_20Kd_su"/>
</dbReference>
<dbReference type="NCBIfam" id="TIGR01957">
    <property type="entry name" value="nuoB_fam"/>
    <property type="match status" value="1"/>
</dbReference>
<dbReference type="NCBIfam" id="NF005012">
    <property type="entry name" value="PRK06411.1"/>
    <property type="match status" value="1"/>
</dbReference>
<dbReference type="PANTHER" id="PTHR11995">
    <property type="entry name" value="NADH DEHYDROGENASE"/>
    <property type="match status" value="1"/>
</dbReference>
<dbReference type="PANTHER" id="PTHR11995:SF14">
    <property type="entry name" value="NADH DEHYDROGENASE [UBIQUINONE] IRON-SULFUR PROTEIN 7, MITOCHONDRIAL"/>
    <property type="match status" value="1"/>
</dbReference>
<dbReference type="Pfam" id="PF01058">
    <property type="entry name" value="Oxidored_q6"/>
    <property type="match status" value="1"/>
</dbReference>
<dbReference type="SUPFAM" id="SSF56770">
    <property type="entry name" value="HydA/Nqo6-like"/>
    <property type="match status" value="1"/>
</dbReference>
<dbReference type="PROSITE" id="PS01150">
    <property type="entry name" value="COMPLEX1_20K"/>
    <property type="match status" value="1"/>
</dbReference>